<accession>Q68WC4</accession>
<gene>
    <name evidence="1" type="primary">rpsU</name>
    <name type="ordered locus">RT0604</name>
</gene>
<keyword id="KW-0687">Ribonucleoprotein</keyword>
<keyword id="KW-0689">Ribosomal protein</keyword>
<name>RS21_RICTY</name>
<evidence type="ECO:0000255" key="1">
    <source>
        <dbReference type="HAMAP-Rule" id="MF_00358"/>
    </source>
</evidence>
<evidence type="ECO:0000305" key="2"/>
<sequence>MILVNVHAGNCDNTLKNFKKKLQRELYFRKMKEQRYYETPSAKRVRKAQEAARRIRKFARKKMYEE</sequence>
<protein>
    <recommendedName>
        <fullName evidence="1">Small ribosomal subunit protein bS21</fullName>
    </recommendedName>
    <alternativeName>
        <fullName evidence="2">30S ribosomal protein S21</fullName>
    </alternativeName>
</protein>
<organism>
    <name type="scientific">Rickettsia typhi (strain ATCC VR-144 / Wilmington)</name>
    <dbReference type="NCBI Taxonomy" id="257363"/>
    <lineage>
        <taxon>Bacteria</taxon>
        <taxon>Pseudomonadati</taxon>
        <taxon>Pseudomonadota</taxon>
        <taxon>Alphaproteobacteria</taxon>
        <taxon>Rickettsiales</taxon>
        <taxon>Rickettsiaceae</taxon>
        <taxon>Rickettsieae</taxon>
        <taxon>Rickettsia</taxon>
        <taxon>typhus group</taxon>
    </lineage>
</organism>
<comment type="similarity">
    <text evidence="1">Belongs to the bacterial ribosomal protein bS21 family.</text>
</comment>
<reference key="1">
    <citation type="journal article" date="2004" name="J. Bacteriol.">
        <title>Complete genome sequence of Rickettsia typhi and comparison with sequences of other Rickettsiae.</title>
        <authorList>
            <person name="McLeod M.P."/>
            <person name="Qin X."/>
            <person name="Karpathy S.E."/>
            <person name="Gioia J."/>
            <person name="Highlander S.K."/>
            <person name="Fox G.E."/>
            <person name="McNeill T.Z."/>
            <person name="Jiang H."/>
            <person name="Muzny D."/>
            <person name="Jacob L.S."/>
            <person name="Hawes A.C."/>
            <person name="Sodergren E."/>
            <person name="Gill R."/>
            <person name="Hume J."/>
            <person name="Morgan M."/>
            <person name="Fan G."/>
            <person name="Amin A.G."/>
            <person name="Gibbs R.A."/>
            <person name="Hong C."/>
            <person name="Yu X.-J."/>
            <person name="Walker D.H."/>
            <person name="Weinstock G.M."/>
        </authorList>
    </citation>
    <scope>NUCLEOTIDE SEQUENCE [LARGE SCALE GENOMIC DNA]</scope>
    <source>
        <strain>ATCC VR-144 / Wilmington</strain>
    </source>
</reference>
<feature type="chain" id="PRO_0000178369" description="Small ribosomal subunit protein bS21">
    <location>
        <begin position="1"/>
        <end position="66"/>
    </location>
</feature>
<proteinExistence type="inferred from homology"/>
<dbReference type="EMBL" id="AE017197">
    <property type="protein sequence ID" value="AAU04068.1"/>
    <property type="molecule type" value="Genomic_DNA"/>
</dbReference>
<dbReference type="RefSeq" id="WP_004599167.1">
    <property type="nucleotide sequence ID" value="NC_006142.1"/>
</dbReference>
<dbReference type="SMR" id="Q68WC4"/>
<dbReference type="GeneID" id="57569740"/>
<dbReference type="KEGG" id="rty:RT0604"/>
<dbReference type="eggNOG" id="COG0828">
    <property type="taxonomic scope" value="Bacteria"/>
</dbReference>
<dbReference type="HOGENOM" id="CLU_159258_0_2_5"/>
<dbReference type="OrthoDB" id="9811907at2"/>
<dbReference type="Proteomes" id="UP000000604">
    <property type="component" value="Chromosome"/>
</dbReference>
<dbReference type="GO" id="GO:1990904">
    <property type="term" value="C:ribonucleoprotein complex"/>
    <property type="evidence" value="ECO:0007669"/>
    <property type="project" value="UniProtKB-KW"/>
</dbReference>
<dbReference type="GO" id="GO:0005840">
    <property type="term" value="C:ribosome"/>
    <property type="evidence" value="ECO:0007669"/>
    <property type="project" value="UniProtKB-KW"/>
</dbReference>
<dbReference type="GO" id="GO:0003735">
    <property type="term" value="F:structural constituent of ribosome"/>
    <property type="evidence" value="ECO:0007669"/>
    <property type="project" value="InterPro"/>
</dbReference>
<dbReference type="GO" id="GO:0006412">
    <property type="term" value="P:translation"/>
    <property type="evidence" value="ECO:0007669"/>
    <property type="project" value="UniProtKB-UniRule"/>
</dbReference>
<dbReference type="Gene3D" id="1.20.5.1150">
    <property type="entry name" value="Ribosomal protein S8"/>
    <property type="match status" value="1"/>
</dbReference>
<dbReference type="HAMAP" id="MF_00358">
    <property type="entry name" value="Ribosomal_bS21"/>
    <property type="match status" value="1"/>
</dbReference>
<dbReference type="InterPro" id="IPR001911">
    <property type="entry name" value="Ribosomal_bS21"/>
</dbReference>
<dbReference type="InterPro" id="IPR038380">
    <property type="entry name" value="Ribosomal_bS21_sf"/>
</dbReference>
<dbReference type="NCBIfam" id="TIGR00030">
    <property type="entry name" value="S21p"/>
    <property type="match status" value="1"/>
</dbReference>
<dbReference type="Pfam" id="PF01165">
    <property type="entry name" value="Ribosomal_S21"/>
    <property type="match status" value="1"/>
</dbReference>